<feature type="chain" id="PRO_0000336087" description="PRAME family member 22">
    <location>
        <begin position="1"/>
        <end position="481"/>
    </location>
</feature>
<feature type="repeat" description="LRR 1; degenerate" evidence="1">
    <location>
        <begin position="99"/>
        <end position="126"/>
    </location>
</feature>
<feature type="repeat" description="LRR 2; degenerate" evidence="1">
    <location>
        <begin position="181"/>
        <end position="205"/>
    </location>
</feature>
<feature type="repeat" description="LRR 3; degenerate" evidence="1">
    <location>
        <begin position="206"/>
        <end position="232"/>
    </location>
</feature>
<feature type="repeat" description="LRR 4; degenerate" evidence="1">
    <location>
        <begin position="233"/>
        <end position="267"/>
    </location>
</feature>
<feature type="repeat" description="LRR 5" evidence="1">
    <location>
        <begin position="268"/>
        <end position="293"/>
    </location>
</feature>
<feature type="repeat" description="LRR 6" evidence="1">
    <location>
        <begin position="294"/>
        <end position="325"/>
    </location>
</feature>
<feature type="repeat" description="LRR 7" evidence="1">
    <location>
        <begin position="326"/>
        <end position="344"/>
    </location>
</feature>
<feature type="repeat" description="LRR 8" evidence="1">
    <location>
        <begin position="350"/>
        <end position="377"/>
    </location>
</feature>
<feature type="repeat" description="LRR 9" evidence="1">
    <location>
        <begin position="378"/>
        <end position="402"/>
    </location>
</feature>
<evidence type="ECO:0000250" key="1">
    <source>
        <dbReference type="UniProtKB" id="Q3UWY1"/>
    </source>
</evidence>
<evidence type="ECO:0000305" key="2"/>
<evidence type="ECO:0000312" key="3">
    <source>
        <dbReference type="HGNC" id="HGNC:34393"/>
    </source>
</evidence>
<proteinExistence type="inferred from homology"/>
<accession>A3QJZ6</accession>
<accession>A6NMM3</accession>
<name>PRA22_HUMAN</name>
<dbReference type="EMBL" id="CR589905">
    <property type="status" value="NOT_ANNOTATED_CDS"/>
    <property type="molecule type" value="Genomic_DNA"/>
</dbReference>
<dbReference type="RefSeq" id="NP_001094101.1">
    <property type="nucleotide sequence ID" value="NM_001100631.1"/>
</dbReference>
<dbReference type="SMR" id="A3QJZ6"/>
<dbReference type="BioGRID" id="575922">
    <property type="interactions" value="1"/>
</dbReference>
<dbReference type="FunCoup" id="A3QJZ6">
    <property type="interactions" value="29"/>
</dbReference>
<dbReference type="IntAct" id="A3QJZ6">
    <property type="interactions" value="1"/>
</dbReference>
<dbReference type="iPTMnet" id="A3QJZ6"/>
<dbReference type="PhosphoSitePlus" id="A3QJZ6"/>
<dbReference type="BioMuta" id="HGNC:34393"/>
<dbReference type="MassIVE" id="A3QJZ6"/>
<dbReference type="PeptideAtlas" id="A3QJZ6"/>
<dbReference type="GeneID" id="653606"/>
<dbReference type="KEGG" id="hsa:653606"/>
<dbReference type="AGR" id="HGNC:34393"/>
<dbReference type="CTD" id="653606"/>
<dbReference type="GeneCards" id="PRAMEF22"/>
<dbReference type="HGNC" id="HGNC:34393">
    <property type="gene designation" value="PRAMEF22"/>
</dbReference>
<dbReference type="neXtProt" id="NX_A3QJZ6"/>
<dbReference type="PharmGKB" id="PA162400009"/>
<dbReference type="InParanoid" id="A3QJZ6"/>
<dbReference type="PAN-GO" id="A3QJZ6">
    <property type="GO annotations" value="1 GO annotation based on evolutionary models"/>
</dbReference>
<dbReference type="PhylomeDB" id="A3QJZ6"/>
<dbReference type="TreeFam" id="TF332708"/>
<dbReference type="PathwayCommons" id="A3QJZ6"/>
<dbReference type="BioGRID-ORCS" id="653606">
    <property type="hits" value="59 hits in 548 CRISPR screens"/>
</dbReference>
<dbReference type="GenomeRNAi" id="653606"/>
<dbReference type="Pharos" id="A3QJZ6">
    <property type="development level" value="Tdark"/>
</dbReference>
<dbReference type="PRO" id="PR:A3QJZ6"/>
<dbReference type="Proteomes" id="UP000005640">
    <property type="component" value="Unplaced"/>
</dbReference>
<dbReference type="RNAct" id="A3QJZ6">
    <property type="molecule type" value="protein"/>
</dbReference>
<dbReference type="GO" id="GO:0031462">
    <property type="term" value="C:Cul2-RING ubiquitin ligase complex"/>
    <property type="evidence" value="ECO:0000318"/>
    <property type="project" value="GO_Central"/>
</dbReference>
<dbReference type="GO" id="GO:0005737">
    <property type="term" value="C:cytoplasm"/>
    <property type="evidence" value="ECO:0000318"/>
    <property type="project" value="GO_Central"/>
</dbReference>
<dbReference type="GO" id="GO:1990756">
    <property type="term" value="F:ubiquitin-like ligase-substrate adaptor activity"/>
    <property type="evidence" value="ECO:0000318"/>
    <property type="project" value="GO_Central"/>
</dbReference>
<dbReference type="GO" id="GO:0043066">
    <property type="term" value="P:negative regulation of apoptotic process"/>
    <property type="evidence" value="ECO:0007669"/>
    <property type="project" value="InterPro"/>
</dbReference>
<dbReference type="GO" id="GO:0045596">
    <property type="term" value="P:negative regulation of cell differentiation"/>
    <property type="evidence" value="ECO:0007669"/>
    <property type="project" value="InterPro"/>
</dbReference>
<dbReference type="GO" id="GO:0045892">
    <property type="term" value="P:negative regulation of DNA-templated transcription"/>
    <property type="evidence" value="ECO:0007669"/>
    <property type="project" value="InterPro"/>
</dbReference>
<dbReference type="GO" id="GO:0008284">
    <property type="term" value="P:positive regulation of cell population proliferation"/>
    <property type="evidence" value="ECO:0007669"/>
    <property type="project" value="InterPro"/>
</dbReference>
<dbReference type="GO" id="GO:0043161">
    <property type="term" value="P:proteasome-mediated ubiquitin-dependent protein catabolic process"/>
    <property type="evidence" value="ECO:0000318"/>
    <property type="project" value="GO_Central"/>
</dbReference>
<dbReference type="FunFam" id="3.80.10.10:FF:000079">
    <property type="entry name" value="PRAME family member 18"/>
    <property type="match status" value="1"/>
</dbReference>
<dbReference type="Gene3D" id="3.80.10.10">
    <property type="entry name" value="Ribonuclease Inhibitor"/>
    <property type="match status" value="1"/>
</dbReference>
<dbReference type="InterPro" id="IPR032675">
    <property type="entry name" value="LRR_dom_sf"/>
</dbReference>
<dbReference type="InterPro" id="IPR026271">
    <property type="entry name" value="PRAME"/>
</dbReference>
<dbReference type="InterPro" id="IPR050694">
    <property type="entry name" value="PRAME_domain"/>
</dbReference>
<dbReference type="PANTHER" id="PTHR14224:SF79">
    <property type="entry name" value="PRAME FAMILY MEMBER 18-RELATED"/>
    <property type="match status" value="1"/>
</dbReference>
<dbReference type="PANTHER" id="PTHR14224">
    <property type="entry name" value="SIMILAR TO PREFERENTIALLY EXPRESSED ANTIGEN IN MELANOMA-LIKE 3"/>
    <property type="match status" value="1"/>
</dbReference>
<dbReference type="PIRSF" id="PIRSF038286">
    <property type="entry name" value="PRAME"/>
    <property type="match status" value="1"/>
</dbReference>
<dbReference type="SUPFAM" id="SSF52047">
    <property type="entry name" value="RNI-like"/>
    <property type="match status" value="1"/>
</dbReference>
<organism>
    <name type="scientific">Homo sapiens</name>
    <name type="common">Human</name>
    <dbReference type="NCBI Taxonomy" id="9606"/>
    <lineage>
        <taxon>Eukaryota</taxon>
        <taxon>Metazoa</taxon>
        <taxon>Chordata</taxon>
        <taxon>Craniata</taxon>
        <taxon>Vertebrata</taxon>
        <taxon>Euteleostomi</taxon>
        <taxon>Mammalia</taxon>
        <taxon>Eutheria</taxon>
        <taxon>Euarchontoglires</taxon>
        <taxon>Primates</taxon>
        <taxon>Haplorrhini</taxon>
        <taxon>Catarrhini</taxon>
        <taxon>Hominidae</taxon>
        <taxon>Homo</taxon>
    </lineage>
</organism>
<comment type="similarity">
    <text evidence="2">Belongs to the PRAME family.</text>
</comment>
<comment type="caution">
    <text evidence="2">It is uncertain whether Met-1 or Met-3 is the initiator.</text>
</comment>
<gene>
    <name evidence="3" type="primary">PRAMEF22</name>
</gene>
<keyword id="KW-0433">Leucine-rich repeat</keyword>
<keyword id="KW-1185">Reference proteome</keyword>
<keyword id="KW-0677">Repeat</keyword>
<sequence>MRMSLQAPRRLLELAGQSLLGDQALAISILDELPRELFPPLFVEAFTSRRCEVLKVMVQAWPFPCLPLGSLMKTPDLEILHYVVDGIDCLLAQKVRPRRWKLQVLELRDVDENFWTIWSGARPLSCSPEAMSKRQTVEDCPRTGEKQPLKVFMDVCLKEKFMDEDLSFFSGWVQHRRGSVHLCCTKVVNYSMSILNFRNILETVYPDSIQVLEIWNMCWPCMIVEFSRYLSQMRNLRKLFISDGCRYLLSSDSQEQLVAEFSSVLLRLEYLQMLYVRRVCFFRGHLDQLIRCLRSPLETLALTYGFLEKVDLKCLPRYPSLSQLKQLNLSHGALRFIRLEPLRALLEKVAATLQTLFLVDCGIRDSKLRVILPALSCCSNLTTFCFHGNDTSMDGLKDLLRHTGRLSNLSLETYPAPRESLDDRGRVISELLTPLQAELMRILREVREPKRIFFGPVSCPCCGTSPTEQLEFNFCLWGRPA</sequence>
<protein>
    <recommendedName>
        <fullName evidence="3">PRAME family member 22</fullName>
    </recommendedName>
</protein>
<reference key="1">
    <citation type="journal article" date="2006" name="Nature">
        <title>The DNA sequence and biological annotation of human chromosome 1.</title>
        <authorList>
            <person name="Gregory S.G."/>
            <person name="Barlow K.F."/>
            <person name="McLay K.E."/>
            <person name="Kaul R."/>
            <person name="Swarbreck D."/>
            <person name="Dunham A."/>
            <person name="Scott C.E."/>
            <person name="Howe K.L."/>
            <person name="Woodfine K."/>
            <person name="Spencer C.C.A."/>
            <person name="Jones M.C."/>
            <person name="Gillson C."/>
            <person name="Searle S."/>
            <person name="Zhou Y."/>
            <person name="Kokocinski F."/>
            <person name="McDonald L."/>
            <person name="Evans R."/>
            <person name="Phillips K."/>
            <person name="Atkinson A."/>
            <person name="Cooper R."/>
            <person name="Jones C."/>
            <person name="Hall R.E."/>
            <person name="Andrews T.D."/>
            <person name="Lloyd C."/>
            <person name="Ainscough R."/>
            <person name="Almeida J.P."/>
            <person name="Ambrose K.D."/>
            <person name="Anderson F."/>
            <person name="Andrew R.W."/>
            <person name="Ashwell R.I.S."/>
            <person name="Aubin K."/>
            <person name="Babbage A.K."/>
            <person name="Bagguley C.L."/>
            <person name="Bailey J."/>
            <person name="Beasley H."/>
            <person name="Bethel G."/>
            <person name="Bird C.P."/>
            <person name="Bray-Allen S."/>
            <person name="Brown J.Y."/>
            <person name="Brown A.J."/>
            <person name="Buckley D."/>
            <person name="Burton J."/>
            <person name="Bye J."/>
            <person name="Carder C."/>
            <person name="Chapman J.C."/>
            <person name="Clark S.Y."/>
            <person name="Clarke G."/>
            <person name="Clee C."/>
            <person name="Cobley V."/>
            <person name="Collier R.E."/>
            <person name="Corby N."/>
            <person name="Coville G.J."/>
            <person name="Davies J."/>
            <person name="Deadman R."/>
            <person name="Dunn M."/>
            <person name="Earthrowl M."/>
            <person name="Ellington A.G."/>
            <person name="Errington H."/>
            <person name="Frankish A."/>
            <person name="Frankland J."/>
            <person name="French L."/>
            <person name="Garner P."/>
            <person name="Garnett J."/>
            <person name="Gay L."/>
            <person name="Ghori M.R.J."/>
            <person name="Gibson R."/>
            <person name="Gilby L.M."/>
            <person name="Gillett W."/>
            <person name="Glithero R.J."/>
            <person name="Grafham D.V."/>
            <person name="Griffiths C."/>
            <person name="Griffiths-Jones S."/>
            <person name="Grocock R."/>
            <person name="Hammond S."/>
            <person name="Harrison E.S.I."/>
            <person name="Hart E."/>
            <person name="Haugen E."/>
            <person name="Heath P.D."/>
            <person name="Holmes S."/>
            <person name="Holt K."/>
            <person name="Howden P.J."/>
            <person name="Hunt A.R."/>
            <person name="Hunt S.E."/>
            <person name="Hunter G."/>
            <person name="Isherwood J."/>
            <person name="James R."/>
            <person name="Johnson C."/>
            <person name="Johnson D."/>
            <person name="Joy A."/>
            <person name="Kay M."/>
            <person name="Kershaw J.K."/>
            <person name="Kibukawa M."/>
            <person name="Kimberley A.M."/>
            <person name="King A."/>
            <person name="Knights A.J."/>
            <person name="Lad H."/>
            <person name="Laird G."/>
            <person name="Lawlor S."/>
            <person name="Leongamornlert D.A."/>
            <person name="Lloyd D.M."/>
            <person name="Loveland J."/>
            <person name="Lovell J."/>
            <person name="Lush M.J."/>
            <person name="Lyne R."/>
            <person name="Martin S."/>
            <person name="Mashreghi-Mohammadi M."/>
            <person name="Matthews L."/>
            <person name="Matthews N.S.W."/>
            <person name="McLaren S."/>
            <person name="Milne S."/>
            <person name="Mistry S."/>
            <person name="Moore M.J.F."/>
            <person name="Nickerson T."/>
            <person name="O'Dell C.N."/>
            <person name="Oliver K."/>
            <person name="Palmeiri A."/>
            <person name="Palmer S.A."/>
            <person name="Parker A."/>
            <person name="Patel D."/>
            <person name="Pearce A.V."/>
            <person name="Peck A.I."/>
            <person name="Pelan S."/>
            <person name="Phelps K."/>
            <person name="Phillimore B.J."/>
            <person name="Plumb R."/>
            <person name="Rajan J."/>
            <person name="Raymond C."/>
            <person name="Rouse G."/>
            <person name="Saenphimmachak C."/>
            <person name="Sehra H.K."/>
            <person name="Sheridan E."/>
            <person name="Shownkeen R."/>
            <person name="Sims S."/>
            <person name="Skuce C.D."/>
            <person name="Smith M."/>
            <person name="Steward C."/>
            <person name="Subramanian S."/>
            <person name="Sycamore N."/>
            <person name="Tracey A."/>
            <person name="Tromans A."/>
            <person name="Van Helmond Z."/>
            <person name="Wall M."/>
            <person name="Wallis J.M."/>
            <person name="White S."/>
            <person name="Whitehead S.L."/>
            <person name="Wilkinson J.E."/>
            <person name="Willey D.L."/>
            <person name="Williams H."/>
            <person name="Wilming L."/>
            <person name="Wray P.W."/>
            <person name="Wu Z."/>
            <person name="Coulson A."/>
            <person name="Vaudin M."/>
            <person name="Sulston J.E."/>
            <person name="Durbin R.M."/>
            <person name="Hubbard T."/>
            <person name="Wooster R."/>
            <person name="Dunham I."/>
            <person name="Carter N.P."/>
            <person name="McVean G."/>
            <person name="Ross M.T."/>
            <person name="Harrow J."/>
            <person name="Olson M.V."/>
            <person name="Beck S."/>
            <person name="Rogers J."/>
            <person name="Bentley D.R."/>
        </authorList>
    </citation>
    <scope>NUCLEOTIDE SEQUENCE [LARGE SCALE GENOMIC DNA]</scope>
</reference>